<feature type="chain" id="PRO_0000212961" description="Palmitoyltransferase pfa4">
    <location>
        <begin position="1"/>
        <end position="428"/>
    </location>
</feature>
<feature type="topological domain" description="Cytoplasmic" evidence="1">
    <location>
        <begin position="1"/>
        <end position="10"/>
    </location>
</feature>
<feature type="transmembrane region" description="Helical" evidence="1">
    <location>
        <begin position="11"/>
        <end position="31"/>
    </location>
</feature>
<feature type="topological domain" description="Lumenal" evidence="1">
    <location>
        <begin position="32"/>
        <end position="43"/>
    </location>
</feature>
<feature type="transmembrane region" description="Helical" evidence="1">
    <location>
        <begin position="44"/>
        <end position="61"/>
    </location>
</feature>
<feature type="topological domain" description="Cytoplasmic" evidence="1">
    <location>
        <begin position="62"/>
        <end position="134"/>
    </location>
</feature>
<feature type="transmembrane region" description="Helical" evidence="1">
    <location>
        <begin position="135"/>
        <end position="155"/>
    </location>
</feature>
<feature type="topological domain" description="Lumenal" evidence="1">
    <location>
        <begin position="156"/>
        <end position="177"/>
    </location>
</feature>
<feature type="transmembrane region" description="Helical" evidence="1">
    <location>
        <begin position="178"/>
        <end position="198"/>
    </location>
</feature>
<feature type="topological domain" description="Cytoplasmic" evidence="1">
    <location>
        <begin position="199"/>
        <end position="428"/>
    </location>
</feature>
<feature type="domain" description="DHHC" evidence="2">
    <location>
        <begin position="91"/>
        <end position="141"/>
    </location>
</feature>
<feature type="region of interest" description="Disordered" evidence="3">
    <location>
        <begin position="339"/>
        <end position="400"/>
    </location>
</feature>
<feature type="compositionally biased region" description="Basic and acidic residues" evidence="3">
    <location>
        <begin position="360"/>
        <end position="373"/>
    </location>
</feature>
<feature type="compositionally biased region" description="Acidic residues" evidence="3">
    <location>
        <begin position="374"/>
        <end position="388"/>
    </location>
</feature>
<feature type="compositionally biased region" description="Basic and acidic residues" evidence="3">
    <location>
        <begin position="389"/>
        <end position="400"/>
    </location>
</feature>
<feature type="active site" description="S-palmitoyl cysteine intermediate" evidence="1">
    <location>
        <position position="121"/>
    </location>
</feature>
<sequence>MLCRSFNISQLAIPFVSVLISFLAYTSQLFFYYFEEAPLRSEEFWRLNIFAVCIWVCYYRACTVDPGRIPKDWTPPNLKQLEKDCAGGRQRWCRRCEAFKPPRAHHCKTCQRCIPKMDHHCPWTSNCVSHFTYPHFMRFLFYAVVGMGYLETLLFERASIVWASRHLPSYLGPGLGQLVHLFILLVVNSLTWLALFILLLRSIWSLALNTTTIESWEIERHETLLRRARHFGGYLSGPGGIQIRIKKQEFPYDIGIWSNIRAGMGGSANVLSWFWPFAATPDRSTGLEFEVNGFEDPNLSWPPPDPDRIPLPAKREDMSAAIAAADASYHRALQARNIQRSNDASHSGGHPIQRRKRFHDRFNENKAKERLSESESDFSDDEEVQDGEEGWKNSEGDRLRDFGVDEEAEFYDEEDIPLGILMQRRRQQ</sequence>
<reference key="1">
    <citation type="journal article" date="2005" name="Nature">
        <title>Genomic sequence of the pathogenic and allergenic filamentous fungus Aspergillus fumigatus.</title>
        <authorList>
            <person name="Nierman W.C."/>
            <person name="Pain A."/>
            <person name="Anderson M.J."/>
            <person name="Wortman J.R."/>
            <person name="Kim H.S."/>
            <person name="Arroyo J."/>
            <person name="Berriman M."/>
            <person name="Abe K."/>
            <person name="Archer D.B."/>
            <person name="Bermejo C."/>
            <person name="Bennett J.W."/>
            <person name="Bowyer P."/>
            <person name="Chen D."/>
            <person name="Collins M."/>
            <person name="Coulsen R."/>
            <person name="Davies R."/>
            <person name="Dyer P.S."/>
            <person name="Farman M.L."/>
            <person name="Fedorova N."/>
            <person name="Fedorova N.D."/>
            <person name="Feldblyum T.V."/>
            <person name="Fischer R."/>
            <person name="Fosker N."/>
            <person name="Fraser A."/>
            <person name="Garcia J.L."/>
            <person name="Garcia M.J."/>
            <person name="Goble A."/>
            <person name="Goldman G.H."/>
            <person name="Gomi K."/>
            <person name="Griffith-Jones S."/>
            <person name="Gwilliam R."/>
            <person name="Haas B.J."/>
            <person name="Haas H."/>
            <person name="Harris D.E."/>
            <person name="Horiuchi H."/>
            <person name="Huang J."/>
            <person name="Humphray S."/>
            <person name="Jimenez J."/>
            <person name="Keller N."/>
            <person name="Khouri H."/>
            <person name="Kitamoto K."/>
            <person name="Kobayashi T."/>
            <person name="Konzack S."/>
            <person name="Kulkarni R."/>
            <person name="Kumagai T."/>
            <person name="Lafton A."/>
            <person name="Latge J.-P."/>
            <person name="Li W."/>
            <person name="Lord A."/>
            <person name="Lu C."/>
            <person name="Majoros W.H."/>
            <person name="May G.S."/>
            <person name="Miller B.L."/>
            <person name="Mohamoud Y."/>
            <person name="Molina M."/>
            <person name="Monod M."/>
            <person name="Mouyna I."/>
            <person name="Mulligan S."/>
            <person name="Murphy L.D."/>
            <person name="O'Neil S."/>
            <person name="Paulsen I."/>
            <person name="Penalva M.A."/>
            <person name="Pertea M."/>
            <person name="Price C."/>
            <person name="Pritchard B.L."/>
            <person name="Quail M.A."/>
            <person name="Rabbinowitsch E."/>
            <person name="Rawlins N."/>
            <person name="Rajandream M.A."/>
            <person name="Reichard U."/>
            <person name="Renauld H."/>
            <person name="Robson G.D."/>
            <person name="Rodriguez de Cordoba S."/>
            <person name="Rodriguez-Pena J.M."/>
            <person name="Ronning C.M."/>
            <person name="Rutter S."/>
            <person name="Salzberg S.L."/>
            <person name="Sanchez M."/>
            <person name="Sanchez-Ferrero J.C."/>
            <person name="Saunders D."/>
            <person name="Seeger K."/>
            <person name="Squares R."/>
            <person name="Squares S."/>
            <person name="Takeuchi M."/>
            <person name="Tekaia F."/>
            <person name="Turner G."/>
            <person name="Vazquez de Aldana C.R."/>
            <person name="Weidman J."/>
            <person name="White O."/>
            <person name="Woodward J.R."/>
            <person name="Yu J.-H."/>
            <person name="Fraser C.M."/>
            <person name="Galagan J.E."/>
            <person name="Asai K."/>
            <person name="Machida M."/>
            <person name="Hall N."/>
            <person name="Barrell B.G."/>
            <person name="Denning D.W."/>
        </authorList>
    </citation>
    <scope>NUCLEOTIDE SEQUENCE [LARGE SCALE GENOMIC DNA]</scope>
    <source>
        <strain>ATCC MYA-4609 / CBS 101355 / FGSC A1100 / Af293</strain>
    </source>
</reference>
<dbReference type="EC" id="2.3.1.225" evidence="1"/>
<dbReference type="EMBL" id="AAHF01000013">
    <property type="protein sequence ID" value="EAL85347.2"/>
    <property type="molecule type" value="Genomic_DNA"/>
</dbReference>
<dbReference type="RefSeq" id="XP_747385.2">
    <property type="nucleotide sequence ID" value="XM_742292.2"/>
</dbReference>
<dbReference type="SMR" id="Q4WC37"/>
<dbReference type="FunCoup" id="Q4WC37">
    <property type="interactions" value="28"/>
</dbReference>
<dbReference type="STRING" id="330879.Q4WC37"/>
<dbReference type="EnsemblFungi" id="EAL85347">
    <property type="protein sequence ID" value="EAL85347"/>
    <property type="gene ID" value="AFUA_8G05830"/>
</dbReference>
<dbReference type="GeneID" id="3504772"/>
<dbReference type="KEGG" id="afm:AFUA_8G05830"/>
<dbReference type="VEuPathDB" id="FungiDB:Afu8g05830"/>
<dbReference type="eggNOG" id="KOG1314">
    <property type="taxonomic scope" value="Eukaryota"/>
</dbReference>
<dbReference type="HOGENOM" id="CLU_027721_8_1_1"/>
<dbReference type="InParanoid" id="Q4WC37"/>
<dbReference type="OMA" id="WEIERHK"/>
<dbReference type="OrthoDB" id="331948at2759"/>
<dbReference type="Proteomes" id="UP000002530">
    <property type="component" value="Chromosome 8"/>
</dbReference>
<dbReference type="GO" id="GO:0005783">
    <property type="term" value="C:endoplasmic reticulum"/>
    <property type="evidence" value="ECO:0000318"/>
    <property type="project" value="GO_Central"/>
</dbReference>
<dbReference type="GO" id="GO:0005789">
    <property type="term" value="C:endoplasmic reticulum membrane"/>
    <property type="evidence" value="ECO:0007669"/>
    <property type="project" value="UniProtKB-SubCell"/>
</dbReference>
<dbReference type="GO" id="GO:0005794">
    <property type="term" value="C:Golgi apparatus"/>
    <property type="evidence" value="ECO:0000318"/>
    <property type="project" value="GO_Central"/>
</dbReference>
<dbReference type="GO" id="GO:0019706">
    <property type="term" value="F:protein-cysteine S-palmitoyltransferase activity"/>
    <property type="evidence" value="ECO:0000318"/>
    <property type="project" value="GO_Central"/>
</dbReference>
<dbReference type="GO" id="GO:0006612">
    <property type="term" value="P:protein targeting to membrane"/>
    <property type="evidence" value="ECO:0000318"/>
    <property type="project" value="GO_Central"/>
</dbReference>
<dbReference type="HAMAP" id="MF_03199">
    <property type="entry name" value="DHHC_PAT_PFA4"/>
    <property type="match status" value="1"/>
</dbReference>
<dbReference type="InterPro" id="IPR001594">
    <property type="entry name" value="Palmitoyltrfase_DHHC"/>
</dbReference>
<dbReference type="InterPro" id="IPR033682">
    <property type="entry name" value="PFA4"/>
</dbReference>
<dbReference type="InterPro" id="IPR039859">
    <property type="entry name" value="PFA4/ZDH16/20/ERF2-like"/>
</dbReference>
<dbReference type="PANTHER" id="PTHR12246">
    <property type="entry name" value="PALMITOYLTRANSFERASE ZDHHC16"/>
    <property type="match status" value="1"/>
</dbReference>
<dbReference type="Pfam" id="PF01529">
    <property type="entry name" value="DHHC"/>
    <property type="match status" value="1"/>
</dbReference>
<dbReference type="PROSITE" id="PS50216">
    <property type="entry name" value="DHHC"/>
    <property type="match status" value="1"/>
</dbReference>
<evidence type="ECO:0000255" key="1">
    <source>
        <dbReference type="HAMAP-Rule" id="MF_03199"/>
    </source>
</evidence>
<evidence type="ECO:0000255" key="2">
    <source>
        <dbReference type="PROSITE-ProRule" id="PRU00067"/>
    </source>
</evidence>
<evidence type="ECO:0000256" key="3">
    <source>
        <dbReference type="SAM" id="MobiDB-lite"/>
    </source>
</evidence>
<protein>
    <recommendedName>
        <fullName evidence="1">Palmitoyltransferase pfa4</fullName>
        <ecNumber evidence="1">2.3.1.225</ecNumber>
    </recommendedName>
    <alternativeName>
        <fullName evidence="1">Protein S-acyltransferase</fullName>
        <shortName evidence="1">PAT</shortName>
    </alternativeName>
    <alternativeName>
        <fullName evidence="1">Protein fatty acyltransferase 4</fullName>
    </alternativeName>
</protein>
<organism>
    <name type="scientific">Aspergillus fumigatus (strain ATCC MYA-4609 / CBS 101355 / FGSC A1100 / Af293)</name>
    <name type="common">Neosartorya fumigata</name>
    <dbReference type="NCBI Taxonomy" id="330879"/>
    <lineage>
        <taxon>Eukaryota</taxon>
        <taxon>Fungi</taxon>
        <taxon>Dikarya</taxon>
        <taxon>Ascomycota</taxon>
        <taxon>Pezizomycotina</taxon>
        <taxon>Eurotiomycetes</taxon>
        <taxon>Eurotiomycetidae</taxon>
        <taxon>Eurotiales</taxon>
        <taxon>Aspergillaceae</taxon>
        <taxon>Aspergillus</taxon>
        <taxon>Aspergillus subgen. Fumigati</taxon>
    </lineage>
</organism>
<comment type="function">
    <text evidence="1">Mediates the reversible addition of palmitate to target proteins, thereby regulating their membrane association and biological function.</text>
</comment>
<comment type="catalytic activity">
    <reaction evidence="1">
        <text>L-cysteinyl-[protein] + hexadecanoyl-CoA = S-hexadecanoyl-L-cysteinyl-[protein] + CoA</text>
        <dbReference type="Rhea" id="RHEA:36683"/>
        <dbReference type="Rhea" id="RHEA-COMP:10131"/>
        <dbReference type="Rhea" id="RHEA-COMP:11032"/>
        <dbReference type="ChEBI" id="CHEBI:29950"/>
        <dbReference type="ChEBI" id="CHEBI:57287"/>
        <dbReference type="ChEBI" id="CHEBI:57379"/>
        <dbReference type="ChEBI" id="CHEBI:74151"/>
        <dbReference type="EC" id="2.3.1.225"/>
    </reaction>
</comment>
<comment type="subcellular location">
    <subcellularLocation>
        <location evidence="1">Endoplasmic reticulum membrane</location>
        <topology evidence="1">Multi-pass membrane protein</topology>
    </subcellularLocation>
</comment>
<comment type="domain">
    <text evidence="1">The DHHC domain is required for palmitoyltransferase activity.</text>
</comment>
<comment type="similarity">
    <text evidence="1">Belongs to the DHHC palmitoyltransferase family. PFA4 subfamily.</text>
</comment>
<name>PFA4_ASPFU</name>
<gene>
    <name evidence="1" type="primary">pfa4</name>
    <name type="ORF">AFUA_8G05830</name>
</gene>
<keyword id="KW-0012">Acyltransferase</keyword>
<keyword id="KW-0256">Endoplasmic reticulum</keyword>
<keyword id="KW-0449">Lipoprotein</keyword>
<keyword id="KW-0472">Membrane</keyword>
<keyword id="KW-0564">Palmitate</keyword>
<keyword id="KW-1185">Reference proteome</keyword>
<keyword id="KW-0808">Transferase</keyword>
<keyword id="KW-0812">Transmembrane</keyword>
<keyword id="KW-1133">Transmembrane helix</keyword>
<proteinExistence type="inferred from homology"/>
<accession>Q4WC37</accession>